<feature type="chain" id="PRO_1000213628" description="UPF0298 protein SZO_03600">
    <location>
        <begin position="1"/>
        <end position="94"/>
    </location>
</feature>
<keyword id="KW-0963">Cytoplasm</keyword>
<proteinExistence type="inferred from homology"/>
<gene>
    <name type="ordered locus">SZO_03600</name>
</gene>
<accession>C0MGT7</accession>
<organism>
    <name type="scientific">Streptococcus equi subsp. zooepidemicus (strain H70)</name>
    <dbReference type="NCBI Taxonomy" id="553483"/>
    <lineage>
        <taxon>Bacteria</taxon>
        <taxon>Bacillati</taxon>
        <taxon>Bacillota</taxon>
        <taxon>Bacilli</taxon>
        <taxon>Lactobacillales</taxon>
        <taxon>Streptococcaceae</taxon>
        <taxon>Streptococcus</taxon>
    </lineage>
</organism>
<sequence length="94" mass="11321">MFQKQQRIGLVIYLYYNRDARKVIKYGDLYYHSRRSRYLVIYINKEDMEEKLKDISRLTFVKEVKVSAFDDIDCDFVGNLHREPLEPQALPEQG</sequence>
<protein>
    <recommendedName>
        <fullName evidence="1">UPF0298 protein SZO_03600</fullName>
    </recommendedName>
</protein>
<comment type="subcellular location">
    <subcellularLocation>
        <location evidence="1">Cytoplasm</location>
    </subcellularLocation>
</comment>
<comment type="similarity">
    <text evidence="1">Belongs to the UPF0298 family.</text>
</comment>
<dbReference type="EMBL" id="FM204884">
    <property type="protein sequence ID" value="CAW98207.1"/>
    <property type="molecule type" value="Genomic_DNA"/>
</dbReference>
<dbReference type="SMR" id="C0MGT7"/>
<dbReference type="KEGG" id="seq:SZO_03600"/>
<dbReference type="PATRIC" id="fig|40041.11.peg.382"/>
<dbReference type="eggNOG" id="COG4471">
    <property type="taxonomic scope" value="Bacteria"/>
</dbReference>
<dbReference type="HOGENOM" id="CLU_159890_1_0_9"/>
<dbReference type="Proteomes" id="UP000001368">
    <property type="component" value="Chromosome"/>
</dbReference>
<dbReference type="GO" id="GO:0005737">
    <property type="term" value="C:cytoplasm"/>
    <property type="evidence" value="ECO:0007669"/>
    <property type="project" value="UniProtKB-SubCell"/>
</dbReference>
<dbReference type="HAMAP" id="MF_01126">
    <property type="entry name" value="UPF0298"/>
    <property type="match status" value="1"/>
</dbReference>
<dbReference type="InterPro" id="IPR016979">
    <property type="entry name" value="DUF2129"/>
</dbReference>
<dbReference type="NCBIfam" id="NF002631">
    <property type="entry name" value="PRK02302.1"/>
    <property type="match status" value="1"/>
</dbReference>
<dbReference type="Pfam" id="PF09902">
    <property type="entry name" value="DUF2129"/>
    <property type="match status" value="1"/>
</dbReference>
<dbReference type="PIRSF" id="PIRSF031653">
    <property type="entry name" value="UCP031653"/>
    <property type="match status" value="1"/>
</dbReference>
<reference key="1">
    <citation type="journal article" date="2009" name="PLoS Pathog.">
        <title>Genomic evidence for the evolution of Streptococcus equi: host restriction, increased virulence, and genetic exchange with human pathogens.</title>
        <authorList>
            <person name="Holden M.T.G."/>
            <person name="Heather Z."/>
            <person name="Paillot R."/>
            <person name="Steward K.F."/>
            <person name="Webb K."/>
            <person name="Ainslie F."/>
            <person name="Jourdan T."/>
            <person name="Bason N.C."/>
            <person name="Holroyd N.E."/>
            <person name="Mungall K."/>
            <person name="Quail M.A."/>
            <person name="Sanders M."/>
            <person name="Simmonds M."/>
            <person name="Willey D."/>
            <person name="Brooks K."/>
            <person name="Aanensen D.M."/>
            <person name="Spratt B.G."/>
            <person name="Jolley K.A."/>
            <person name="Maiden M.C.J."/>
            <person name="Kehoe M."/>
            <person name="Chanter N."/>
            <person name="Bentley S.D."/>
            <person name="Robinson C."/>
            <person name="Maskell D.J."/>
            <person name="Parkhill J."/>
            <person name="Waller A.S."/>
        </authorList>
    </citation>
    <scope>NUCLEOTIDE SEQUENCE [LARGE SCALE GENOMIC DNA]</scope>
    <source>
        <strain>H70</strain>
    </source>
</reference>
<name>Y360_STRS7</name>
<evidence type="ECO:0000255" key="1">
    <source>
        <dbReference type="HAMAP-Rule" id="MF_01126"/>
    </source>
</evidence>